<organism>
    <name type="scientific">Clostridium botulinum (strain Okra / Type B1)</name>
    <dbReference type="NCBI Taxonomy" id="498213"/>
    <lineage>
        <taxon>Bacteria</taxon>
        <taxon>Bacillati</taxon>
        <taxon>Bacillota</taxon>
        <taxon>Clostridia</taxon>
        <taxon>Eubacteriales</taxon>
        <taxon>Clostridiaceae</taxon>
        <taxon>Clostridium</taxon>
    </lineage>
</organism>
<comment type="function">
    <text evidence="1">Specifically methylates the N7 position of a guanine in 16S rRNA.</text>
</comment>
<comment type="subcellular location">
    <subcellularLocation>
        <location evidence="1">Cytoplasm</location>
    </subcellularLocation>
</comment>
<comment type="similarity">
    <text evidence="1">Belongs to the methyltransferase superfamily. RNA methyltransferase RsmG family.</text>
</comment>
<protein>
    <recommendedName>
        <fullName evidence="1">Ribosomal RNA small subunit methyltransferase G</fullName>
        <ecNumber evidence="1">2.1.1.-</ecNumber>
    </recommendedName>
    <alternativeName>
        <fullName evidence="1">16S rRNA 7-methylguanosine methyltransferase</fullName>
        <shortName evidence="1">16S rRNA m7G methyltransferase</shortName>
    </alternativeName>
</protein>
<proteinExistence type="inferred from homology"/>
<gene>
    <name evidence="1" type="primary">rsmG</name>
    <name type="ordered locus">CLD_0833</name>
</gene>
<keyword id="KW-0963">Cytoplasm</keyword>
<keyword id="KW-0489">Methyltransferase</keyword>
<keyword id="KW-0698">rRNA processing</keyword>
<keyword id="KW-0949">S-adenosyl-L-methionine</keyword>
<keyword id="KW-0808">Transferase</keyword>
<feature type="chain" id="PRO_0000342911" description="Ribosomal RNA small subunit methyltransferase G">
    <location>
        <begin position="1"/>
        <end position="239"/>
    </location>
</feature>
<feature type="binding site" evidence="1">
    <location>
        <position position="78"/>
    </location>
    <ligand>
        <name>S-adenosyl-L-methionine</name>
        <dbReference type="ChEBI" id="CHEBI:59789"/>
    </ligand>
</feature>
<feature type="binding site" evidence="1">
    <location>
        <position position="83"/>
    </location>
    <ligand>
        <name>S-adenosyl-L-methionine</name>
        <dbReference type="ChEBI" id="CHEBI:59789"/>
    </ligand>
</feature>
<feature type="binding site" evidence="1">
    <location>
        <begin position="129"/>
        <end position="130"/>
    </location>
    <ligand>
        <name>S-adenosyl-L-methionine</name>
        <dbReference type="ChEBI" id="CHEBI:59789"/>
    </ligand>
</feature>
<feature type="binding site" evidence="1">
    <location>
        <position position="148"/>
    </location>
    <ligand>
        <name>S-adenosyl-L-methionine</name>
        <dbReference type="ChEBI" id="CHEBI:59789"/>
    </ligand>
</feature>
<evidence type="ECO:0000255" key="1">
    <source>
        <dbReference type="HAMAP-Rule" id="MF_00074"/>
    </source>
</evidence>
<reference key="1">
    <citation type="journal article" date="2007" name="PLoS ONE">
        <title>Analysis of the neurotoxin complex genes in Clostridium botulinum A1-A4 and B1 strains: BoNT/A3, /Ba4 and /B1 clusters are located within plasmids.</title>
        <authorList>
            <person name="Smith T.J."/>
            <person name="Hill K.K."/>
            <person name="Foley B.T."/>
            <person name="Detter J.C."/>
            <person name="Munk A.C."/>
            <person name="Bruce D.C."/>
            <person name="Doggett N.A."/>
            <person name="Smith L.A."/>
            <person name="Marks J.D."/>
            <person name="Xie G."/>
            <person name="Brettin T.S."/>
        </authorList>
    </citation>
    <scope>NUCLEOTIDE SEQUENCE [LARGE SCALE GENOMIC DNA]</scope>
    <source>
        <strain>Okra / Type B1</strain>
    </source>
</reference>
<name>RSMG_CLOBK</name>
<dbReference type="EC" id="2.1.1.-" evidence="1"/>
<dbReference type="EMBL" id="CP000939">
    <property type="protein sequence ID" value="ACA43993.1"/>
    <property type="molecule type" value="Genomic_DNA"/>
</dbReference>
<dbReference type="RefSeq" id="WP_003398942.1">
    <property type="nucleotide sequence ID" value="NC_010516.1"/>
</dbReference>
<dbReference type="SMR" id="B1IHR7"/>
<dbReference type="KEGG" id="cbb:CLD_0833"/>
<dbReference type="HOGENOM" id="CLU_065341_0_0_9"/>
<dbReference type="Proteomes" id="UP000008541">
    <property type="component" value="Chromosome"/>
</dbReference>
<dbReference type="GO" id="GO:0005829">
    <property type="term" value="C:cytosol"/>
    <property type="evidence" value="ECO:0007669"/>
    <property type="project" value="TreeGrafter"/>
</dbReference>
<dbReference type="GO" id="GO:0070043">
    <property type="term" value="F:rRNA (guanine-N7-)-methyltransferase activity"/>
    <property type="evidence" value="ECO:0007669"/>
    <property type="project" value="UniProtKB-UniRule"/>
</dbReference>
<dbReference type="CDD" id="cd02440">
    <property type="entry name" value="AdoMet_MTases"/>
    <property type="match status" value="1"/>
</dbReference>
<dbReference type="FunFam" id="3.40.50.150:FF:000041">
    <property type="entry name" value="Ribosomal RNA small subunit methyltransferase G"/>
    <property type="match status" value="1"/>
</dbReference>
<dbReference type="Gene3D" id="3.40.50.150">
    <property type="entry name" value="Vaccinia Virus protein VP39"/>
    <property type="match status" value="1"/>
</dbReference>
<dbReference type="HAMAP" id="MF_00074">
    <property type="entry name" value="16SrRNA_methyltr_G"/>
    <property type="match status" value="1"/>
</dbReference>
<dbReference type="InterPro" id="IPR003682">
    <property type="entry name" value="rRNA_ssu_MeTfrase_G"/>
</dbReference>
<dbReference type="InterPro" id="IPR029063">
    <property type="entry name" value="SAM-dependent_MTases_sf"/>
</dbReference>
<dbReference type="NCBIfam" id="TIGR00138">
    <property type="entry name" value="rsmG_gidB"/>
    <property type="match status" value="1"/>
</dbReference>
<dbReference type="PANTHER" id="PTHR31760">
    <property type="entry name" value="S-ADENOSYL-L-METHIONINE-DEPENDENT METHYLTRANSFERASES SUPERFAMILY PROTEIN"/>
    <property type="match status" value="1"/>
</dbReference>
<dbReference type="PANTHER" id="PTHR31760:SF0">
    <property type="entry name" value="S-ADENOSYL-L-METHIONINE-DEPENDENT METHYLTRANSFERASES SUPERFAMILY PROTEIN"/>
    <property type="match status" value="1"/>
</dbReference>
<dbReference type="Pfam" id="PF02527">
    <property type="entry name" value="GidB"/>
    <property type="match status" value="1"/>
</dbReference>
<dbReference type="PIRSF" id="PIRSF003078">
    <property type="entry name" value="GidB"/>
    <property type="match status" value="1"/>
</dbReference>
<dbReference type="SUPFAM" id="SSF53335">
    <property type="entry name" value="S-adenosyl-L-methionine-dependent methyltransferases"/>
    <property type="match status" value="1"/>
</dbReference>
<sequence>MEFFNILQSACNDVNLDFNDKKYNQLISYKNLIQEWNKKINLTAIVEDDEIIKKHFIDCIKIFKSSPIGEAKSLIDIGTGAGFPGIPIKILKEDIEITLLDSLQKRINFLNIVIGELQLKNIQCLHGRAEDYAQEIQHRQKYDIAVSRAVANLAVLSEFCIPFVEKGGYFIAMKGPSVEEEITAATKSIEILGGKIEDIIKIDIEDTDLKHNLVIIKKVKETGKRYPRKPGIIKKNPLK</sequence>
<accession>B1IHR7</accession>